<reference key="1">
    <citation type="journal article" date="2009" name="J. Bacteriol.">
        <title>Complete and draft genome sequences of six members of the Aquificales.</title>
        <authorList>
            <person name="Reysenbach A.-L."/>
            <person name="Hamamura N."/>
            <person name="Podar M."/>
            <person name="Griffiths E."/>
            <person name="Ferreira S."/>
            <person name="Hochstein R."/>
            <person name="Heidelberg J."/>
            <person name="Johnson J."/>
            <person name="Mead D."/>
            <person name="Pohorille A."/>
            <person name="Sarmiento M."/>
            <person name="Schweighofer K."/>
            <person name="Seshadri R."/>
            <person name="Voytek M.A."/>
        </authorList>
    </citation>
    <scope>NUCLEOTIDE SEQUENCE [LARGE SCALE GENOMIC DNA]</scope>
    <source>
        <strain>Y04AAS1</strain>
    </source>
</reference>
<accession>B4U9K9</accession>
<keyword id="KW-0963">Cytoplasm</keyword>
<keyword id="KW-0342">GTP-binding</keyword>
<keyword id="KW-0436">Ligase</keyword>
<keyword id="KW-0460">Magnesium</keyword>
<keyword id="KW-0479">Metal-binding</keyword>
<keyword id="KW-0547">Nucleotide-binding</keyword>
<keyword id="KW-0658">Purine biosynthesis</keyword>
<feature type="chain" id="PRO_1000089304" description="Adenylosuccinate synthetase">
    <location>
        <begin position="1"/>
        <end position="414"/>
    </location>
</feature>
<feature type="active site" description="Proton acceptor" evidence="1">
    <location>
        <position position="13"/>
    </location>
</feature>
<feature type="active site" description="Proton donor" evidence="1">
    <location>
        <position position="41"/>
    </location>
</feature>
<feature type="binding site" evidence="1">
    <location>
        <begin position="12"/>
        <end position="18"/>
    </location>
    <ligand>
        <name>GTP</name>
        <dbReference type="ChEBI" id="CHEBI:37565"/>
    </ligand>
</feature>
<feature type="binding site" description="in other chain" evidence="1">
    <location>
        <begin position="13"/>
        <end position="16"/>
    </location>
    <ligand>
        <name>IMP</name>
        <dbReference type="ChEBI" id="CHEBI:58053"/>
        <note>ligand shared between dimeric partners</note>
    </ligand>
</feature>
<feature type="binding site" evidence="1">
    <location>
        <position position="13"/>
    </location>
    <ligand>
        <name>Mg(2+)</name>
        <dbReference type="ChEBI" id="CHEBI:18420"/>
    </ligand>
</feature>
<feature type="binding site" description="in other chain" evidence="1">
    <location>
        <begin position="38"/>
        <end position="41"/>
    </location>
    <ligand>
        <name>IMP</name>
        <dbReference type="ChEBI" id="CHEBI:58053"/>
        <note>ligand shared between dimeric partners</note>
    </ligand>
</feature>
<feature type="binding site" evidence="1">
    <location>
        <begin position="40"/>
        <end position="42"/>
    </location>
    <ligand>
        <name>GTP</name>
        <dbReference type="ChEBI" id="CHEBI:37565"/>
    </ligand>
</feature>
<feature type="binding site" evidence="1">
    <location>
        <position position="40"/>
    </location>
    <ligand>
        <name>Mg(2+)</name>
        <dbReference type="ChEBI" id="CHEBI:18420"/>
    </ligand>
</feature>
<feature type="binding site" description="in other chain" evidence="1">
    <location>
        <position position="124"/>
    </location>
    <ligand>
        <name>IMP</name>
        <dbReference type="ChEBI" id="CHEBI:58053"/>
        <note>ligand shared between dimeric partners</note>
    </ligand>
</feature>
<feature type="binding site" evidence="1">
    <location>
        <position position="138"/>
    </location>
    <ligand>
        <name>IMP</name>
        <dbReference type="ChEBI" id="CHEBI:58053"/>
        <note>ligand shared between dimeric partners</note>
    </ligand>
</feature>
<feature type="binding site" description="in other chain" evidence="1">
    <location>
        <position position="216"/>
    </location>
    <ligand>
        <name>IMP</name>
        <dbReference type="ChEBI" id="CHEBI:58053"/>
        <note>ligand shared between dimeric partners</note>
    </ligand>
</feature>
<feature type="binding site" description="in other chain" evidence="1">
    <location>
        <position position="231"/>
    </location>
    <ligand>
        <name>IMP</name>
        <dbReference type="ChEBI" id="CHEBI:58053"/>
        <note>ligand shared between dimeric partners</note>
    </ligand>
</feature>
<feature type="binding site" evidence="1">
    <location>
        <begin position="293"/>
        <end position="299"/>
    </location>
    <ligand>
        <name>substrate</name>
    </ligand>
</feature>
<feature type="binding site" description="in other chain" evidence="1">
    <location>
        <position position="297"/>
    </location>
    <ligand>
        <name>IMP</name>
        <dbReference type="ChEBI" id="CHEBI:58053"/>
        <note>ligand shared between dimeric partners</note>
    </ligand>
</feature>
<feature type="binding site" evidence="1">
    <location>
        <position position="299"/>
    </location>
    <ligand>
        <name>GTP</name>
        <dbReference type="ChEBI" id="CHEBI:37565"/>
    </ligand>
</feature>
<feature type="binding site" evidence="1">
    <location>
        <begin position="325"/>
        <end position="327"/>
    </location>
    <ligand>
        <name>GTP</name>
        <dbReference type="ChEBI" id="CHEBI:37565"/>
    </ligand>
</feature>
<feature type="binding site" evidence="1">
    <location>
        <begin position="403"/>
        <end position="405"/>
    </location>
    <ligand>
        <name>GTP</name>
        <dbReference type="ChEBI" id="CHEBI:37565"/>
    </ligand>
</feature>
<protein>
    <recommendedName>
        <fullName evidence="1">Adenylosuccinate synthetase</fullName>
        <shortName evidence="1">AMPSase</shortName>
        <shortName evidence="1">AdSS</shortName>
        <ecNumber evidence="1">6.3.4.4</ecNumber>
    </recommendedName>
    <alternativeName>
        <fullName evidence="1">IMP--aspartate ligase</fullName>
    </alternativeName>
</protein>
<evidence type="ECO:0000255" key="1">
    <source>
        <dbReference type="HAMAP-Rule" id="MF_00011"/>
    </source>
</evidence>
<comment type="function">
    <text evidence="1">Plays an important role in the de novo pathway of purine nucleotide biosynthesis. Catalyzes the first committed step in the biosynthesis of AMP from IMP.</text>
</comment>
<comment type="catalytic activity">
    <reaction evidence="1">
        <text>IMP + L-aspartate + GTP = N(6)-(1,2-dicarboxyethyl)-AMP + GDP + phosphate + 2 H(+)</text>
        <dbReference type="Rhea" id="RHEA:15753"/>
        <dbReference type="ChEBI" id="CHEBI:15378"/>
        <dbReference type="ChEBI" id="CHEBI:29991"/>
        <dbReference type="ChEBI" id="CHEBI:37565"/>
        <dbReference type="ChEBI" id="CHEBI:43474"/>
        <dbReference type="ChEBI" id="CHEBI:57567"/>
        <dbReference type="ChEBI" id="CHEBI:58053"/>
        <dbReference type="ChEBI" id="CHEBI:58189"/>
        <dbReference type="EC" id="6.3.4.4"/>
    </reaction>
</comment>
<comment type="cofactor">
    <cofactor evidence="1">
        <name>Mg(2+)</name>
        <dbReference type="ChEBI" id="CHEBI:18420"/>
    </cofactor>
    <text evidence="1">Binds 1 Mg(2+) ion per subunit.</text>
</comment>
<comment type="pathway">
    <text evidence="1">Purine metabolism; AMP biosynthesis via de novo pathway; AMP from IMP: step 1/2.</text>
</comment>
<comment type="subunit">
    <text evidence="1">Homodimer.</text>
</comment>
<comment type="subcellular location">
    <subcellularLocation>
        <location evidence="1">Cytoplasm</location>
    </subcellularLocation>
</comment>
<comment type="similarity">
    <text evidence="1">Belongs to the adenylosuccinate synthetase family.</text>
</comment>
<proteinExistence type="inferred from homology"/>
<gene>
    <name evidence="1" type="primary">purA</name>
    <name type="ordered locus">HY04AAS1_1134</name>
</gene>
<sequence length="414" mass="47028">MEKLVIVGAQWGDEGKGKIVDLLSKDYETAVRYQGGNNAGHTVIVEGKKYILHLVPTSILHKHTKGIIAQGMVIDLEVLSKEIKDLEVLDIENRLFISDRAHIILPYHKILDRLFEKKSNIGTTLKGIGPTYMMKYARKGIRMVDLKDEDIFFNRLEENLEFTKELCEKVYNERFELNKDEVAEDIFRLFKPIEKNIKNTFKIIQTSKSVIFEGAQGVMLDIDIGTYPYVTSSNSSTLGLSNGTGLHPKYFTDAKFVGVSKAYTTRVGAGPFPTELKDEIGDALRDFGHEYGSTTGRPRRCGWLDLVALKYACDTNGFDEIILTKLDVLDIFDEIKVCIAYENFEDFPSSLKDMENARPIYKTLKGWKATTKAARDKSKLPKEALDYIMFIEDYLNTKVSMLSTGPAREDYLYL</sequence>
<name>PURA_HYDS0</name>
<organism>
    <name type="scientific">Hydrogenobaculum sp. (strain Y04AAS1)</name>
    <dbReference type="NCBI Taxonomy" id="380749"/>
    <lineage>
        <taxon>Bacteria</taxon>
        <taxon>Pseudomonadati</taxon>
        <taxon>Aquificota</taxon>
        <taxon>Aquificia</taxon>
        <taxon>Aquificales</taxon>
        <taxon>Aquificaceae</taxon>
        <taxon>Hydrogenobaculum</taxon>
    </lineage>
</organism>
<dbReference type="EC" id="6.3.4.4" evidence="1"/>
<dbReference type="EMBL" id="CP001130">
    <property type="protein sequence ID" value="ACG57820.1"/>
    <property type="molecule type" value="Genomic_DNA"/>
</dbReference>
<dbReference type="RefSeq" id="WP_012514176.1">
    <property type="nucleotide sequence ID" value="NC_011126.1"/>
</dbReference>
<dbReference type="SMR" id="B4U9K9"/>
<dbReference type="STRING" id="380749.HY04AAS1_1134"/>
<dbReference type="KEGG" id="hya:HY04AAS1_1134"/>
<dbReference type="eggNOG" id="COG0104">
    <property type="taxonomic scope" value="Bacteria"/>
</dbReference>
<dbReference type="HOGENOM" id="CLU_029848_0_0_0"/>
<dbReference type="OrthoDB" id="9807553at2"/>
<dbReference type="UniPathway" id="UPA00075">
    <property type="reaction ID" value="UER00335"/>
</dbReference>
<dbReference type="GO" id="GO:0005737">
    <property type="term" value="C:cytoplasm"/>
    <property type="evidence" value="ECO:0007669"/>
    <property type="project" value="UniProtKB-SubCell"/>
</dbReference>
<dbReference type="GO" id="GO:0004019">
    <property type="term" value="F:adenylosuccinate synthase activity"/>
    <property type="evidence" value="ECO:0007669"/>
    <property type="project" value="UniProtKB-UniRule"/>
</dbReference>
<dbReference type="GO" id="GO:0005525">
    <property type="term" value="F:GTP binding"/>
    <property type="evidence" value="ECO:0007669"/>
    <property type="project" value="UniProtKB-UniRule"/>
</dbReference>
<dbReference type="GO" id="GO:0000287">
    <property type="term" value="F:magnesium ion binding"/>
    <property type="evidence" value="ECO:0007669"/>
    <property type="project" value="UniProtKB-UniRule"/>
</dbReference>
<dbReference type="GO" id="GO:0044208">
    <property type="term" value="P:'de novo' AMP biosynthetic process"/>
    <property type="evidence" value="ECO:0007669"/>
    <property type="project" value="UniProtKB-UniRule"/>
</dbReference>
<dbReference type="GO" id="GO:0046040">
    <property type="term" value="P:IMP metabolic process"/>
    <property type="evidence" value="ECO:0007669"/>
    <property type="project" value="TreeGrafter"/>
</dbReference>
<dbReference type="CDD" id="cd03108">
    <property type="entry name" value="AdSS"/>
    <property type="match status" value="1"/>
</dbReference>
<dbReference type="FunFam" id="1.10.300.10:FF:000001">
    <property type="entry name" value="Adenylosuccinate synthetase"/>
    <property type="match status" value="1"/>
</dbReference>
<dbReference type="FunFam" id="3.90.170.10:FF:000001">
    <property type="entry name" value="Adenylosuccinate synthetase"/>
    <property type="match status" value="1"/>
</dbReference>
<dbReference type="Gene3D" id="3.40.440.10">
    <property type="entry name" value="Adenylosuccinate Synthetase, subunit A, domain 1"/>
    <property type="match status" value="1"/>
</dbReference>
<dbReference type="Gene3D" id="1.10.300.10">
    <property type="entry name" value="Adenylosuccinate Synthetase, subunit A, domain 2"/>
    <property type="match status" value="1"/>
</dbReference>
<dbReference type="Gene3D" id="3.90.170.10">
    <property type="entry name" value="Adenylosuccinate Synthetase, subunit A, domain 3"/>
    <property type="match status" value="1"/>
</dbReference>
<dbReference type="HAMAP" id="MF_00011">
    <property type="entry name" value="Adenylosucc_synth"/>
    <property type="match status" value="1"/>
</dbReference>
<dbReference type="InterPro" id="IPR018220">
    <property type="entry name" value="Adenylosuccin_syn_GTP-bd"/>
</dbReference>
<dbReference type="InterPro" id="IPR033128">
    <property type="entry name" value="Adenylosuccin_syn_Lys_AS"/>
</dbReference>
<dbReference type="InterPro" id="IPR042109">
    <property type="entry name" value="Adenylosuccinate_synth_dom1"/>
</dbReference>
<dbReference type="InterPro" id="IPR042110">
    <property type="entry name" value="Adenylosuccinate_synth_dom2"/>
</dbReference>
<dbReference type="InterPro" id="IPR042111">
    <property type="entry name" value="Adenylosuccinate_synth_dom3"/>
</dbReference>
<dbReference type="InterPro" id="IPR001114">
    <property type="entry name" value="Adenylosuccinate_synthetase"/>
</dbReference>
<dbReference type="InterPro" id="IPR027417">
    <property type="entry name" value="P-loop_NTPase"/>
</dbReference>
<dbReference type="NCBIfam" id="NF002223">
    <property type="entry name" value="PRK01117.1"/>
    <property type="match status" value="1"/>
</dbReference>
<dbReference type="NCBIfam" id="NF010355">
    <property type="entry name" value="PRK13783.1"/>
    <property type="match status" value="1"/>
</dbReference>
<dbReference type="NCBIfam" id="TIGR00184">
    <property type="entry name" value="purA"/>
    <property type="match status" value="1"/>
</dbReference>
<dbReference type="PANTHER" id="PTHR11846">
    <property type="entry name" value="ADENYLOSUCCINATE SYNTHETASE"/>
    <property type="match status" value="1"/>
</dbReference>
<dbReference type="PANTHER" id="PTHR11846:SF0">
    <property type="entry name" value="ADENYLOSUCCINATE SYNTHETASE"/>
    <property type="match status" value="1"/>
</dbReference>
<dbReference type="Pfam" id="PF00709">
    <property type="entry name" value="Adenylsucc_synt"/>
    <property type="match status" value="1"/>
</dbReference>
<dbReference type="SMART" id="SM00788">
    <property type="entry name" value="Adenylsucc_synt"/>
    <property type="match status" value="1"/>
</dbReference>
<dbReference type="SUPFAM" id="SSF52540">
    <property type="entry name" value="P-loop containing nucleoside triphosphate hydrolases"/>
    <property type="match status" value="1"/>
</dbReference>
<dbReference type="PROSITE" id="PS01266">
    <property type="entry name" value="ADENYLOSUCCIN_SYN_1"/>
    <property type="match status" value="1"/>
</dbReference>
<dbReference type="PROSITE" id="PS00513">
    <property type="entry name" value="ADENYLOSUCCIN_SYN_2"/>
    <property type="match status" value="1"/>
</dbReference>